<organism>
    <name type="scientific">Geotalea daltonii (strain DSM 22248 / JCM 15807 / FRC-32)</name>
    <name type="common">Geobacter daltonii</name>
    <dbReference type="NCBI Taxonomy" id="316067"/>
    <lineage>
        <taxon>Bacteria</taxon>
        <taxon>Pseudomonadati</taxon>
        <taxon>Thermodesulfobacteriota</taxon>
        <taxon>Desulfuromonadia</taxon>
        <taxon>Geobacterales</taxon>
        <taxon>Geobacteraceae</taxon>
        <taxon>Geotalea</taxon>
    </lineage>
</organism>
<evidence type="ECO:0000255" key="1">
    <source>
        <dbReference type="HAMAP-Rule" id="MF_00206"/>
    </source>
</evidence>
<evidence type="ECO:0000255" key="2">
    <source>
        <dbReference type="PROSITE-ProRule" id="PRU01266"/>
    </source>
</evidence>
<proteinExistence type="inferred from homology"/>
<name>LIPA_GEODF</name>
<gene>
    <name evidence="1" type="primary">lipA</name>
    <name type="ordered locus">Geob_1320</name>
</gene>
<accession>B9M4F4</accession>
<comment type="function">
    <text evidence="1">Catalyzes the radical-mediated insertion of two sulfur atoms into the C-6 and C-8 positions of the octanoyl moiety bound to the lipoyl domains of lipoate-dependent enzymes, thereby converting the octanoylated domains into lipoylated derivatives.</text>
</comment>
<comment type="catalytic activity">
    <reaction evidence="1">
        <text>[[Fe-S] cluster scaffold protein carrying a second [4Fe-4S](2+) cluster] + N(6)-octanoyl-L-lysyl-[protein] + 2 oxidized [2Fe-2S]-[ferredoxin] + 2 S-adenosyl-L-methionine + 4 H(+) = [[Fe-S] cluster scaffold protein] + N(6)-[(R)-dihydrolipoyl]-L-lysyl-[protein] + 4 Fe(3+) + 2 hydrogen sulfide + 2 5'-deoxyadenosine + 2 L-methionine + 2 reduced [2Fe-2S]-[ferredoxin]</text>
        <dbReference type="Rhea" id="RHEA:16585"/>
        <dbReference type="Rhea" id="RHEA-COMP:9928"/>
        <dbReference type="Rhea" id="RHEA-COMP:10000"/>
        <dbReference type="Rhea" id="RHEA-COMP:10001"/>
        <dbReference type="Rhea" id="RHEA-COMP:10475"/>
        <dbReference type="Rhea" id="RHEA-COMP:14568"/>
        <dbReference type="Rhea" id="RHEA-COMP:14569"/>
        <dbReference type="ChEBI" id="CHEBI:15378"/>
        <dbReference type="ChEBI" id="CHEBI:17319"/>
        <dbReference type="ChEBI" id="CHEBI:29034"/>
        <dbReference type="ChEBI" id="CHEBI:29919"/>
        <dbReference type="ChEBI" id="CHEBI:33722"/>
        <dbReference type="ChEBI" id="CHEBI:33737"/>
        <dbReference type="ChEBI" id="CHEBI:33738"/>
        <dbReference type="ChEBI" id="CHEBI:57844"/>
        <dbReference type="ChEBI" id="CHEBI:59789"/>
        <dbReference type="ChEBI" id="CHEBI:78809"/>
        <dbReference type="ChEBI" id="CHEBI:83100"/>
        <dbReference type="EC" id="2.8.1.8"/>
    </reaction>
</comment>
<comment type="cofactor">
    <cofactor evidence="1">
        <name>[4Fe-4S] cluster</name>
        <dbReference type="ChEBI" id="CHEBI:49883"/>
    </cofactor>
    <text evidence="1">Binds 2 [4Fe-4S] clusters per subunit. One cluster is coordinated with 3 cysteines and an exchangeable S-adenosyl-L-methionine.</text>
</comment>
<comment type="pathway">
    <text evidence="1">Protein modification; protein lipoylation via endogenous pathway; protein N(6)-(lipoyl)lysine from octanoyl-[acyl-carrier-protein]: step 2/2.</text>
</comment>
<comment type="subcellular location">
    <subcellularLocation>
        <location evidence="1">Cytoplasm</location>
    </subcellularLocation>
</comment>
<comment type="similarity">
    <text evidence="1">Belongs to the radical SAM superfamily. Lipoyl synthase family.</text>
</comment>
<keyword id="KW-0004">4Fe-4S</keyword>
<keyword id="KW-0963">Cytoplasm</keyword>
<keyword id="KW-0408">Iron</keyword>
<keyword id="KW-0411">Iron-sulfur</keyword>
<keyword id="KW-0479">Metal-binding</keyword>
<keyword id="KW-1185">Reference proteome</keyword>
<keyword id="KW-0949">S-adenosyl-L-methionine</keyword>
<keyword id="KW-0808">Transferase</keyword>
<reference key="1">
    <citation type="submission" date="2009-01" db="EMBL/GenBank/DDBJ databases">
        <title>Complete sequence of Geobacter sp. FRC-32.</title>
        <authorList>
            <consortium name="US DOE Joint Genome Institute"/>
            <person name="Lucas S."/>
            <person name="Copeland A."/>
            <person name="Lapidus A."/>
            <person name="Glavina del Rio T."/>
            <person name="Dalin E."/>
            <person name="Tice H."/>
            <person name="Bruce D."/>
            <person name="Goodwin L."/>
            <person name="Pitluck S."/>
            <person name="Saunders E."/>
            <person name="Brettin T."/>
            <person name="Detter J.C."/>
            <person name="Han C."/>
            <person name="Larimer F."/>
            <person name="Land M."/>
            <person name="Hauser L."/>
            <person name="Kyrpides N."/>
            <person name="Ovchinnikova G."/>
            <person name="Kostka J."/>
            <person name="Richardson P."/>
        </authorList>
    </citation>
    <scope>NUCLEOTIDE SEQUENCE [LARGE SCALE GENOMIC DNA]</scope>
    <source>
        <strain>DSM 22248 / JCM 15807 / FRC-32</strain>
    </source>
</reference>
<sequence length="294" mass="32559">MKITRRPEWLQKKVSPAAHADMERLLGGLQLHTVCQEAHCPNISECFRQRQATFLILGKLCTRLCSFCNVTKQTPLAVDQAEPERVAAAVELLKLTHVVVTSPTRDDLADGGAALYAATVAAIRNASPQTKIELLVPDFAGNQESIAAVVSACPHILGHNLETVPRLYSIRSGADYRRSLLMLEMIRRLNPAMKTKTGLMLGLGETEEELFQALRDLRRVDCSYLSLGQYLAPSRSHYPVQDYPSPETFDRYREQALSMGFEHVESGPYVRSSYHAEHYGTGTGHAKLSPAPAD</sequence>
<feature type="chain" id="PRO_1000124633" description="Lipoyl synthase">
    <location>
        <begin position="1"/>
        <end position="294"/>
    </location>
</feature>
<feature type="domain" description="Radical SAM core" evidence="2">
    <location>
        <begin position="47"/>
        <end position="262"/>
    </location>
</feature>
<feature type="binding site" evidence="1">
    <location>
        <position position="35"/>
    </location>
    <ligand>
        <name>[4Fe-4S] cluster</name>
        <dbReference type="ChEBI" id="CHEBI:49883"/>
        <label>1</label>
    </ligand>
</feature>
<feature type="binding site" evidence="1">
    <location>
        <position position="40"/>
    </location>
    <ligand>
        <name>[4Fe-4S] cluster</name>
        <dbReference type="ChEBI" id="CHEBI:49883"/>
        <label>1</label>
    </ligand>
</feature>
<feature type="binding site" evidence="1">
    <location>
        <position position="46"/>
    </location>
    <ligand>
        <name>[4Fe-4S] cluster</name>
        <dbReference type="ChEBI" id="CHEBI:49883"/>
        <label>1</label>
    </ligand>
</feature>
<feature type="binding site" evidence="1">
    <location>
        <position position="61"/>
    </location>
    <ligand>
        <name>[4Fe-4S] cluster</name>
        <dbReference type="ChEBI" id="CHEBI:49883"/>
        <label>2</label>
        <note>4Fe-4S-S-AdoMet</note>
    </ligand>
</feature>
<feature type="binding site" evidence="1">
    <location>
        <position position="65"/>
    </location>
    <ligand>
        <name>[4Fe-4S] cluster</name>
        <dbReference type="ChEBI" id="CHEBI:49883"/>
        <label>2</label>
        <note>4Fe-4S-S-AdoMet</note>
    </ligand>
</feature>
<feature type="binding site" evidence="1">
    <location>
        <position position="68"/>
    </location>
    <ligand>
        <name>[4Fe-4S] cluster</name>
        <dbReference type="ChEBI" id="CHEBI:49883"/>
        <label>2</label>
        <note>4Fe-4S-S-AdoMet</note>
    </ligand>
</feature>
<feature type="binding site" evidence="1">
    <location>
        <position position="273"/>
    </location>
    <ligand>
        <name>[4Fe-4S] cluster</name>
        <dbReference type="ChEBI" id="CHEBI:49883"/>
        <label>1</label>
    </ligand>
</feature>
<dbReference type="EC" id="2.8.1.8" evidence="1"/>
<dbReference type="EMBL" id="CP001390">
    <property type="protein sequence ID" value="ACM19680.1"/>
    <property type="molecule type" value="Genomic_DNA"/>
</dbReference>
<dbReference type="RefSeq" id="WP_012646409.1">
    <property type="nucleotide sequence ID" value="NC_011979.1"/>
</dbReference>
<dbReference type="SMR" id="B9M4F4"/>
<dbReference type="STRING" id="316067.Geob_1320"/>
<dbReference type="KEGG" id="geo:Geob_1320"/>
<dbReference type="eggNOG" id="COG0320">
    <property type="taxonomic scope" value="Bacteria"/>
</dbReference>
<dbReference type="HOGENOM" id="CLU_033144_2_1_7"/>
<dbReference type="OrthoDB" id="9787898at2"/>
<dbReference type="UniPathway" id="UPA00538">
    <property type="reaction ID" value="UER00593"/>
</dbReference>
<dbReference type="Proteomes" id="UP000007721">
    <property type="component" value="Chromosome"/>
</dbReference>
<dbReference type="GO" id="GO:0005737">
    <property type="term" value="C:cytoplasm"/>
    <property type="evidence" value="ECO:0007669"/>
    <property type="project" value="UniProtKB-SubCell"/>
</dbReference>
<dbReference type="GO" id="GO:0051539">
    <property type="term" value="F:4 iron, 4 sulfur cluster binding"/>
    <property type="evidence" value="ECO:0007669"/>
    <property type="project" value="UniProtKB-UniRule"/>
</dbReference>
<dbReference type="GO" id="GO:0016992">
    <property type="term" value="F:lipoate synthase activity"/>
    <property type="evidence" value="ECO:0007669"/>
    <property type="project" value="UniProtKB-UniRule"/>
</dbReference>
<dbReference type="GO" id="GO:0046872">
    <property type="term" value="F:metal ion binding"/>
    <property type="evidence" value="ECO:0007669"/>
    <property type="project" value="UniProtKB-KW"/>
</dbReference>
<dbReference type="CDD" id="cd01335">
    <property type="entry name" value="Radical_SAM"/>
    <property type="match status" value="1"/>
</dbReference>
<dbReference type="Gene3D" id="3.20.20.70">
    <property type="entry name" value="Aldolase class I"/>
    <property type="match status" value="1"/>
</dbReference>
<dbReference type="HAMAP" id="MF_00206">
    <property type="entry name" value="Lipoyl_synth"/>
    <property type="match status" value="1"/>
</dbReference>
<dbReference type="InterPro" id="IPR013785">
    <property type="entry name" value="Aldolase_TIM"/>
</dbReference>
<dbReference type="InterPro" id="IPR006638">
    <property type="entry name" value="Elp3/MiaA/NifB-like_rSAM"/>
</dbReference>
<dbReference type="InterPro" id="IPR003698">
    <property type="entry name" value="Lipoyl_synth"/>
</dbReference>
<dbReference type="InterPro" id="IPR007197">
    <property type="entry name" value="rSAM"/>
</dbReference>
<dbReference type="NCBIfam" id="TIGR00510">
    <property type="entry name" value="lipA"/>
    <property type="match status" value="1"/>
</dbReference>
<dbReference type="NCBIfam" id="NF004019">
    <property type="entry name" value="PRK05481.1"/>
    <property type="match status" value="1"/>
</dbReference>
<dbReference type="NCBIfam" id="NF009544">
    <property type="entry name" value="PRK12928.1"/>
    <property type="match status" value="1"/>
</dbReference>
<dbReference type="PANTHER" id="PTHR10949">
    <property type="entry name" value="LIPOYL SYNTHASE"/>
    <property type="match status" value="1"/>
</dbReference>
<dbReference type="PANTHER" id="PTHR10949:SF0">
    <property type="entry name" value="LIPOYL SYNTHASE, MITOCHONDRIAL"/>
    <property type="match status" value="1"/>
</dbReference>
<dbReference type="Pfam" id="PF04055">
    <property type="entry name" value="Radical_SAM"/>
    <property type="match status" value="1"/>
</dbReference>
<dbReference type="PIRSF" id="PIRSF005963">
    <property type="entry name" value="Lipoyl_synth"/>
    <property type="match status" value="1"/>
</dbReference>
<dbReference type="SFLD" id="SFLDF00271">
    <property type="entry name" value="lipoyl_synthase"/>
    <property type="match status" value="1"/>
</dbReference>
<dbReference type="SFLD" id="SFLDG01058">
    <property type="entry name" value="lipoyl_synthase_like"/>
    <property type="match status" value="1"/>
</dbReference>
<dbReference type="SMART" id="SM00729">
    <property type="entry name" value="Elp3"/>
    <property type="match status" value="1"/>
</dbReference>
<dbReference type="SUPFAM" id="SSF102114">
    <property type="entry name" value="Radical SAM enzymes"/>
    <property type="match status" value="1"/>
</dbReference>
<dbReference type="PROSITE" id="PS51918">
    <property type="entry name" value="RADICAL_SAM"/>
    <property type="match status" value="1"/>
</dbReference>
<protein>
    <recommendedName>
        <fullName evidence="1">Lipoyl synthase</fullName>
        <ecNumber evidence="1">2.8.1.8</ecNumber>
    </recommendedName>
    <alternativeName>
        <fullName evidence="1">Lip-syn</fullName>
        <shortName evidence="1">LS</shortName>
    </alternativeName>
    <alternativeName>
        <fullName evidence="1">Lipoate synthase</fullName>
    </alternativeName>
    <alternativeName>
        <fullName evidence="1">Lipoic acid synthase</fullName>
    </alternativeName>
    <alternativeName>
        <fullName evidence="1">Sulfur insertion protein LipA</fullName>
    </alternativeName>
</protein>